<feature type="chain" id="PRO_0000402020" description="Methylthioribose-1-phosphate isomerase">
    <location>
        <begin position="1"/>
        <end position="424"/>
    </location>
</feature>
<feature type="active site" description="Proton donor" evidence="1">
    <location>
        <position position="281"/>
    </location>
</feature>
<feature type="site" description="Transition state stabilizer" evidence="1">
    <location>
        <position position="177"/>
    </location>
</feature>
<keyword id="KW-0028">Amino-acid biosynthesis</keyword>
<keyword id="KW-0963">Cytoplasm</keyword>
<keyword id="KW-0413">Isomerase</keyword>
<keyword id="KW-0486">Methionine biosynthesis</keyword>
<keyword id="KW-0539">Nucleus</keyword>
<name>MTNA_CANDC</name>
<sequence>MSTTTRTLQAIKFDRNNIKLEILDQLLLPYSTTYIPITSIEDAFKAIKLMQVRGAPAIAIVGAFSVVVEVSNYLKQSDSNRKTIENLNDSLDYLITSRPTAVNLANALNDIKQLLQEFNDTDIINEKIYQQIYDYAIALYDEDLANNKKIGENGLKYIINTLTEQNFKGPFSIMTICNTGSLATSGHGTALGIIRSTYQALQKNNSKEEFWLDHIYPCETRPYNQGAKLTTYELDYEQIPFTLICDNMVSSLINTLSDDDNKKPIKTNQISPVKFIIVGADRIVENGDTANKIGTFQLSTIANFFNNNKFIQQQSKSNTTKTTINKEIKFIVAAPKTTIDLNTKTGDDIVIEERPANELTTLVGPLLNEAGDVGEKLTVGIATPGISVWNPAFDVTPHELIDSIVTEDPHVFTKDENGEFNLIK</sequence>
<reference key="1">
    <citation type="journal article" date="2009" name="Genome Res.">
        <title>Comparative genomics of the fungal pathogens Candida dubliniensis and Candida albicans.</title>
        <authorList>
            <person name="Jackson A.P."/>
            <person name="Gamble J.A."/>
            <person name="Yeomans T."/>
            <person name="Moran G.P."/>
            <person name="Saunders D."/>
            <person name="Harris D."/>
            <person name="Aslett M."/>
            <person name="Barrell J.F."/>
            <person name="Butler G."/>
            <person name="Citiulo F."/>
            <person name="Coleman D.C."/>
            <person name="de Groot P.W.J."/>
            <person name="Goodwin T.J."/>
            <person name="Quail M.A."/>
            <person name="McQuillan J."/>
            <person name="Munro C.A."/>
            <person name="Pain A."/>
            <person name="Poulter R.T."/>
            <person name="Rajandream M.A."/>
            <person name="Renauld H."/>
            <person name="Spiering M.J."/>
            <person name="Tivey A."/>
            <person name="Gow N.A.R."/>
            <person name="Barrell B."/>
            <person name="Sullivan D.J."/>
            <person name="Berriman M."/>
        </authorList>
    </citation>
    <scope>NUCLEOTIDE SEQUENCE [LARGE SCALE GENOMIC DNA]</scope>
    <source>
        <strain>CD36 / ATCC MYA-646 / CBS 7987 / NCPF 3949 / NRRL Y-17841</strain>
    </source>
</reference>
<evidence type="ECO:0000255" key="1">
    <source>
        <dbReference type="HAMAP-Rule" id="MF_03119"/>
    </source>
</evidence>
<proteinExistence type="inferred from homology"/>
<dbReference type="EC" id="5.3.1.23" evidence="1"/>
<dbReference type="EMBL" id="FM992689">
    <property type="protein sequence ID" value="CAX43385.1"/>
    <property type="molecule type" value="Genomic_DNA"/>
</dbReference>
<dbReference type="RefSeq" id="XP_002418085.1">
    <property type="nucleotide sequence ID" value="XM_002418040.1"/>
</dbReference>
<dbReference type="SMR" id="B9WAG5"/>
<dbReference type="GeneID" id="8045655"/>
<dbReference type="KEGG" id="cdu:CD36_16050"/>
<dbReference type="CGD" id="CAL0000171135">
    <property type="gene designation" value="Cd36_16050"/>
</dbReference>
<dbReference type="VEuPathDB" id="FungiDB:CD36_16050"/>
<dbReference type="eggNOG" id="KOG1468">
    <property type="taxonomic scope" value="Eukaryota"/>
</dbReference>
<dbReference type="HOGENOM" id="CLU_016218_1_3_1"/>
<dbReference type="OrthoDB" id="2461at2759"/>
<dbReference type="UniPathway" id="UPA00904">
    <property type="reaction ID" value="UER00874"/>
</dbReference>
<dbReference type="Proteomes" id="UP000002605">
    <property type="component" value="Chromosome 2"/>
</dbReference>
<dbReference type="GO" id="GO:0005737">
    <property type="term" value="C:cytoplasm"/>
    <property type="evidence" value="ECO:0007669"/>
    <property type="project" value="UniProtKB-SubCell"/>
</dbReference>
<dbReference type="GO" id="GO:0005634">
    <property type="term" value="C:nucleus"/>
    <property type="evidence" value="ECO:0007669"/>
    <property type="project" value="UniProtKB-SubCell"/>
</dbReference>
<dbReference type="GO" id="GO:0046523">
    <property type="term" value="F:S-methyl-5-thioribose-1-phosphate isomerase activity"/>
    <property type="evidence" value="ECO:0007669"/>
    <property type="project" value="UniProtKB-UniRule"/>
</dbReference>
<dbReference type="GO" id="GO:0019509">
    <property type="term" value="P:L-methionine salvage from methylthioadenosine"/>
    <property type="evidence" value="ECO:0007669"/>
    <property type="project" value="UniProtKB-UniRule"/>
</dbReference>
<dbReference type="FunFam" id="1.20.120.420:FF:000006">
    <property type="entry name" value="Methylthioribose-1-phosphate isomerase"/>
    <property type="match status" value="1"/>
</dbReference>
<dbReference type="Gene3D" id="1.20.120.420">
    <property type="entry name" value="translation initiation factor eif-2b, domain 1"/>
    <property type="match status" value="1"/>
</dbReference>
<dbReference type="Gene3D" id="3.40.50.10470">
    <property type="entry name" value="Translation initiation factor eif-2b, domain 2"/>
    <property type="match status" value="1"/>
</dbReference>
<dbReference type="HAMAP" id="MF_01678">
    <property type="entry name" value="Salvage_MtnA"/>
    <property type="match status" value="1"/>
</dbReference>
<dbReference type="InterPro" id="IPR000649">
    <property type="entry name" value="IF-2B-related"/>
</dbReference>
<dbReference type="InterPro" id="IPR005251">
    <property type="entry name" value="IF-M1Pi"/>
</dbReference>
<dbReference type="InterPro" id="IPR042529">
    <property type="entry name" value="IF_2B-like_C"/>
</dbReference>
<dbReference type="InterPro" id="IPR011559">
    <property type="entry name" value="Initiation_fac_2B_a/b/d"/>
</dbReference>
<dbReference type="InterPro" id="IPR027363">
    <property type="entry name" value="M1Pi_N"/>
</dbReference>
<dbReference type="InterPro" id="IPR037171">
    <property type="entry name" value="NagB/RpiA_transferase-like"/>
</dbReference>
<dbReference type="NCBIfam" id="TIGR00524">
    <property type="entry name" value="eIF-2B_rel"/>
    <property type="match status" value="1"/>
</dbReference>
<dbReference type="NCBIfam" id="TIGR00512">
    <property type="entry name" value="salvage_mtnA"/>
    <property type="match status" value="1"/>
</dbReference>
<dbReference type="PANTHER" id="PTHR43475">
    <property type="entry name" value="METHYLTHIORIBOSE-1-PHOSPHATE ISOMERASE"/>
    <property type="match status" value="1"/>
</dbReference>
<dbReference type="PANTHER" id="PTHR43475:SF1">
    <property type="entry name" value="METHYLTHIORIBOSE-1-PHOSPHATE ISOMERASE"/>
    <property type="match status" value="1"/>
</dbReference>
<dbReference type="Pfam" id="PF01008">
    <property type="entry name" value="IF-2B"/>
    <property type="match status" value="2"/>
</dbReference>
<dbReference type="SUPFAM" id="SSF100950">
    <property type="entry name" value="NagB/RpiA/CoA transferase-like"/>
    <property type="match status" value="1"/>
</dbReference>
<protein>
    <recommendedName>
        <fullName evidence="1">Methylthioribose-1-phosphate isomerase</fullName>
        <shortName evidence="1">M1Pi</shortName>
        <shortName evidence="1">MTR-1-P isomerase</shortName>
        <ecNumber evidence="1">5.3.1.23</ecNumber>
    </recommendedName>
    <alternativeName>
        <fullName evidence="1">S-methyl-5-thioribose-1-phosphate isomerase</fullName>
    </alternativeName>
    <alternativeName>
        <fullName evidence="1">Translation initiation factor eIF-2B subunit alpha/beta/delta-like protein</fullName>
    </alternativeName>
</protein>
<accession>B9WAG5</accession>
<organism>
    <name type="scientific">Candida dubliniensis (strain CD36 / ATCC MYA-646 / CBS 7987 / NCPF 3949 / NRRL Y-17841)</name>
    <name type="common">Yeast</name>
    <dbReference type="NCBI Taxonomy" id="573826"/>
    <lineage>
        <taxon>Eukaryota</taxon>
        <taxon>Fungi</taxon>
        <taxon>Dikarya</taxon>
        <taxon>Ascomycota</taxon>
        <taxon>Saccharomycotina</taxon>
        <taxon>Pichiomycetes</taxon>
        <taxon>Debaryomycetaceae</taxon>
        <taxon>Candida/Lodderomyces clade</taxon>
        <taxon>Candida</taxon>
    </lineage>
</organism>
<gene>
    <name evidence="1" type="primary">MRI1</name>
    <name type="ORF">CD36_16050</name>
</gene>
<comment type="function">
    <text evidence="1">Catalyzes the interconversion of methylthioribose-1-phosphate (MTR-1-P) into methylthioribulose-1-phosphate (MTRu-1-P).</text>
</comment>
<comment type="catalytic activity">
    <reaction evidence="1">
        <text>5-(methylsulfanyl)-alpha-D-ribose 1-phosphate = 5-(methylsulfanyl)-D-ribulose 1-phosphate</text>
        <dbReference type="Rhea" id="RHEA:19989"/>
        <dbReference type="ChEBI" id="CHEBI:58533"/>
        <dbReference type="ChEBI" id="CHEBI:58548"/>
        <dbReference type="EC" id="5.3.1.23"/>
    </reaction>
</comment>
<comment type="pathway">
    <text evidence="1">Amino-acid biosynthesis; L-methionine biosynthesis via salvage pathway; L-methionine from S-methyl-5-thio-alpha-D-ribose 1-phosphate: step 1/6.</text>
</comment>
<comment type="subcellular location">
    <subcellularLocation>
        <location evidence="1">Cytoplasm</location>
    </subcellularLocation>
    <subcellularLocation>
        <location evidence="1">Nucleus</location>
    </subcellularLocation>
</comment>
<comment type="similarity">
    <text evidence="1">Belongs to the eIF-2B alpha/beta/delta subunits family. MtnA subfamily.</text>
</comment>